<organism>
    <name type="scientific">Prochlorococcus marinus subsp. pastoris (strain CCMP1986 / NIES-2087 / MED4)</name>
    <dbReference type="NCBI Taxonomy" id="59919"/>
    <lineage>
        <taxon>Bacteria</taxon>
        <taxon>Bacillati</taxon>
        <taxon>Cyanobacteriota</taxon>
        <taxon>Cyanophyceae</taxon>
        <taxon>Synechococcales</taxon>
        <taxon>Prochlorococcaceae</taxon>
        <taxon>Prochlorococcus</taxon>
    </lineage>
</organism>
<sequence length="154" mass="18027">MSNKKEIVVTDWIKQNCHEGNFLNLTLSSDQRRVFRGKRKSDCNQELQLQLPREGKLNDGDILLTNQKKLFVQIIAQKENLIKITAKTSIELIKVAYHLGNRHVEIEINENILFTKSDYIIEELLRNFDVVYSKVEKKFFPEIGAFHHEKKSLS</sequence>
<evidence type="ECO:0000255" key="1">
    <source>
        <dbReference type="HAMAP-Rule" id="MF_00822"/>
    </source>
</evidence>
<dbReference type="EMBL" id="BX548174">
    <property type="protein sequence ID" value="CAE19426.1"/>
    <property type="molecule type" value="Genomic_DNA"/>
</dbReference>
<dbReference type="RefSeq" id="WP_011132600.1">
    <property type="nucleotide sequence ID" value="NC_005072.1"/>
</dbReference>
<dbReference type="SMR" id="Q7V1B2"/>
<dbReference type="STRING" id="59919.PMM0967"/>
<dbReference type="KEGG" id="pmm:PMM0967"/>
<dbReference type="eggNOG" id="COG2371">
    <property type="taxonomic scope" value="Bacteria"/>
</dbReference>
<dbReference type="HOGENOM" id="CLU_093757_2_0_3"/>
<dbReference type="OrthoDB" id="5421304at2"/>
<dbReference type="Proteomes" id="UP000001026">
    <property type="component" value="Chromosome"/>
</dbReference>
<dbReference type="GO" id="GO:0005737">
    <property type="term" value="C:cytoplasm"/>
    <property type="evidence" value="ECO:0007669"/>
    <property type="project" value="UniProtKB-SubCell"/>
</dbReference>
<dbReference type="GO" id="GO:0016151">
    <property type="term" value="F:nickel cation binding"/>
    <property type="evidence" value="ECO:0007669"/>
    <property type="project" value="UniProtKB-UniRule"/>
</dbReference>
<dbReference type="GO" id="GO:0051082">
    <property type="term" value="F:unfolded protein binding"/>
    <property type="evidence" value="ECO:0007669"/>
    <property type="project" value="UniProtKB-UniRule"/>
</dbReference>
<dbReference type="GO" id="GO:0006457">
    <property type="term" value="P:protein folding"/>
    <property type="evidence" value="ECO:0007669"/>
    <property type="project" value="InterPro"/>
</dbReference>
<dbReference type="GO" id="GO:0065003">
    <property type="term" value="P:protein-containing complex assembly"/>
    <property type="evidence" value="ECO:0007669"/>
    <property type="project" value="InterPro"/>
</dbReference>
<dbReference type="GO" id="GO:0019627">
    <property type="term" value="P:urea metabolic process"/>
    <property type="evidence" value="ECO:0007669"/>
    <property type="project" value="InterPro"/>
</dbReference>
<dbReference type="CDD" id="cd00571">
    <property type="entry name" value="UreE"/>
    <property type="match status" value="1"/>
</dbReference>
<dbReference type="Gene3D" id="2.60.260.20">
    <property type="entry name" value="Urease metallochaperone UreE, N-terminal domain"/>
    <property type="match status" value="1"/>
</dbReference>
<dbReference type="Gene3D" id="3.30.70.790">
    <property type="entry name" value="UreE, C-terminal domain"/>
    <property type="match status" value="1"/>
</dbReference>
<dbReference type="HAMAP" id="MF_00822">
    <property type="entry name" value="UreE"/>
    <property type="match status" value="1"/>
</dbReference>
<dbReference type="InterPro" id="IPR012406">
    <property type="entry name" value="UreE"/>
</dbReference>
<dbReference type="InterPro" id="IPR007864">
    <property type="entry name" value="UreE_C_dom"/>
</dbReference>
<dbReference type="InterPro" id="IPR004029">
    <property type="entry name" value="UreE_N"/>
</dbReference>
<dbReference type="InterPro" id="IPR036118">
    <property type="entry name" value="UreE_N_sf"/>
</dbReference>
<dbReference type="NCBIfam" id="NF009756">
    <property type="entry name" value="PRK13261.2-2"/>
    <property type="match status" value="1"/>
</dbReference>
<dbReference type="Pfam" id="PF05194">
    <property type="entry name" value="UreE_C"/>
    <property type="match status" value="1"/>
</dbReference>
<dbReference type="PIRSF" id="PIRSF036402">
    <property type="entry name" value="Ureas_acces_UreE"/>
    <property type="match status" value="1"/>
</dbReference>
<dbReference type="SMART" id="SM00988">
    <property type="entry name" value="UreE_N"/>
    <property type="match status" value="1"/>
</dbReference>
<dbReference type="SUPFAM" id="SSF69737">
    <property type="entry name" value="Urease metallochaperone UreE, C-terminal domain"/>
    <property type="match status" value="1"/>
</dbReference>
<dbReference type="SUPFAM" id="SSF69287">
    <property type="entry name" value="Urease metallochaperone UreE, N-terminal domain"/>
    <property type="match status" value="1"/>
</dbReference>
<feature type="chain" id="PRO_0000223420" description="Urease accessory protein UreE">
    <location>
        <begin position="1"/>
        <end position="154"/>
    </location>
</feature>
<keyword id="KW-0143">Chaperone</keyword>
<keyword id="KW-0963">Cytoplasm</keyword>
<keyword id="KW-0533">Nickel</keyword>
<keyword id="KW-0996">Nickel insertion</keyword>
<comment type="function">
    <text evidence="1">Involved in urease metallocenter assembly. Binds nickel. Probably functions as a nickel donor during metallocenter assembly.</text>
</comment>
<comment type="subcellular location">
    <subcellularLocation>
        <location evidence="1">Cytoplasm</location>
    </subcellularLocation>
</comment>
<comment type="similarity">
    <text evidence="1">Belongs to the UreE family.</text>
</comment>
<proteinExistence type="inferred from homology"/>
<gene>
    <name evidence="1" type="primary">ureE</name>
    <name type="ordered locus">PMM0967</name>
</gene>
<protein>
    <recommendedName>
        <fullName evidence="1">Urease accessory protein UreE</fullName>
    </recommendedName>
</protein>
<accession>Q7V1B2</accession>
<name>UREE_PROMP</name>
<reference key="1">
    <citation type="journal article" date="2003" name="Nature">
        <title>Genome divergence in two Prochlorococcus ecotypes reflects oceanic niche differentiation.</title>
        <authorList>
            <person name="Rocap G."/>
            <person name="Larimer F.W."/>
            <person name="Lamerdin J.E."/>
            <person name="Malfatti S."/>
            <person name="Chain P."/>
            <person name="Ahlgren N.A."/>
            <person name="Arellano A."/>
            <person name="Coleman M."/>
            <person name="Hauser L."/>
            <person name="Hess W.R."/>
            <person name="Johnson Z.I."/>
            <person name="Land M.L."/>
            <person name="Lindell D."/>
            <person name="Post A.F."/>
            <person name="Regala W."/>
            <person name="Shah M."/>
            <person name="Shaw S.L."/>
            <person name="Steglich C."/>
            <person name="Sullivan M.B."/>
            <person name="Ting C.S."/>
            <person name="Tolonen A."/>
            <person name="Webb E.A."/>
            <person name="Zinser E.R."/>
            <person name="Chisholm S.W."/>
        </authorList>
    </citation>
    <scope>NUCLEOTIDE SEQUENCE [LARGE SCALE GENOMIC DNA]</scope>
    <source>
        <strain>CCMP1986 / NIES-2087 / MED4</strain>
    </source>
</reference>